<feature type="chain" id="PRO_1000025457" description="Glutamyl-tRNA(Gln) amidotransferase subunit D">
    <location>
        <begin position="1"/>
        <end position="418"/>
    </location>
</feature>
<feature type="domain" description="Asparaginase/glutaminase" evidence="2">
    <location>
        <begin position="74"/>
        <end position="405"/>
    </location>
</feature>
<feature type="active site" evidence="1">
    <location>
        <position position="84"/>
    </location>
</feature>
<feature type="active site" evidence="1">
    <location>
        <position position="160"/>
    </location>
</feature>
<feature type="active site" evidence="1">
    <location>
        <position position="161"/>
    </location>
</feature>
<feature type="active site" evidence="1">
    <location>
        <position position="237"/>
    </location>
</feature>
<gene>
    <name evidence="1" type="primary">gatD</name>
    <name type="ordered locus">MmarC5_0324</name>
</gene>
<reference key="1">
    <citation type="submission" date="2007-03" db="EMBL/GenBank/DDBJ databases">
        <title>Complete sequence of chromosome of Methanococcus maripaludis C5.</title>
        <authorList>
            <consortium name="US DOE Joint Genome Institute"/>
            <person name="Copeland A."/>
            <person name="Lucas S."/>
            <person name="Lapidus A."/>
            <person name="Barry K."/>
            <person name="Glavina del Rio T."/>
            <person name="Dalin E."/>
            <person name="Tice H."/>
            <person name="Pitluck S."/>
            <person name="Chertkov O."/>
            <person name="Brettin T."/>
            <person name="Bruce D."/>
            <person name="Han C."/>
            <person name="Detter J.C."/>
            <person name="Schmutz J."/>
            <person name="Larimer F."/>
            <person name="Land M."/>
            <person name="Hauser L."/>
            <person name="Kyrpides N."/>
            <person name="Mikhailova N."/>
            <person name="Sieprawska-Lupa M."/>
            <person name="Whitman W.B."/>
            <person name="Richardson P."/>
        </authorList>
    </citation>
    <scope>NUCLEOTIDE SEQUENCE [LARGE SCALE GENOMIC DNA]</scope>
    <source>
        <strain>C5 / ATCC BAA-1333</strain>
    </source>
</reference>
<name>GATD_METM5</name>
<sequence>MDIGDFVKLELENTTYSGTVMPSLNEDTVVIKMKSGYNVGLDKKKIKNIEILESGDKPKYGLPPLNLEKNPKLKNISILSTGGTVASRVDYKTGAVHPAFTADDLIRAVPELMDIANIKGKVILNILSENMLPAYWKMTADAIKEEIENGAEGIVIAHGTDTMHYTASALSFMVTSEVPIILVGAQRSSDRPSSDAALNIIAAVKAATEPIKGVYVLMHGETGDTVCHLHEGTKVRKLHSSRRDAFKSVNETPIAEINPFIKKVTYLRDVKSQDKSKIKEVVLNTDLEEKVALIKVYPGIDSEILKFYVDNGYKGIILEGTGLGHTPETFFEGIDYANENNVLVAMTTQTINGRVNMNVYSNGRELQAKGVIPCEDMLPEVAFVKLMHLLGNYGFEESKELMSKNIVGEINESINLEC</sequence>
<organism>
    <name type="scientific">Methanococcus maripaludis (strain C5 / ATCC BAA-1333)</name>
    <dbReference type="NCBI Taxonomy" id="402880"/>
    <lineage>
        <taxon>Archaea</taxon>
        <taxon>Methanobacteriati</taxon>
        <taxon>Methanobacteriota</taxon>
        <taxon>Methanomada group</taxon>
        <taxon>Methanococci</taxon>
        <taxon>Methanococcales</taxon>
        <taxon>Methanococcaceae</taxon>
        <taxon>Methanococcus</taxon>
    </lineage>
</organism>
<protein>
    <recommendedName>
        <fullName evidence="1">Glutamyl-tRNA(Gln) amidotransferase subunit D</fullName>
        <shortName evidence="1">Glu-ADT subunit D</shortName>
        <ecNumber evidence="1">6.3.5.-</ecNumber>
    </recommendedName>
</protein>
<evidence type="ECO:0000255" key="1">
    <source>
        <dbReference type="HAMAP-Rule" id="MF_00586"/>
    </source>
</evidence>
<evidence type="ECO:0000255" key="2">
    <source>
        <dbReference type="PROSITE-ProRule" id="PRU01068"/>
    </source>
</evidence>
<accession>A4FWR5</accession>
<keyword id="KW-0067">ATP-binding</keyword>
<keyword id="KW-0436">Ligase</keyword>
<keyword id="KW-0547">Nucleotide-binding</keyword>
<keyword id="KW-0648">Protein biosynthesis</keyword>
<proteinExistence type="inferred from homology"/>
<dbReference type="EC" id="6.3.5.-" evidence="1"/>
<dbReference type="EMBL" id="CP000609">
    <property type="protein sequence ID" value="ABO34640.1"/>
    <property type="molecule type" value="Genomic_DNA"/>
</dbReference>
<dbReference type="RefSeq" id="WP_011868095.1">
    <property type="nucleotide sequence ID" value="NC_009135.1"/>
</dbReference>
<dbReference type="SMR" id="A4FWR5"/>
<dbReference type="STRING" id="402880.MmarC5_0324"/>
<dbReference type="GeneID" id="4928293"/>
<dbReference type="KEGG" id="mmq:MmarC5_0324"/>
<dbReference type="eggNOG" id="arCOG01924">
    <property type="taxonomic scope" value="Archaea"/>
</dbReference>
<dbReference type="HOGENOM" id="CLU_019134_2_1_2"/>
<dbReference type="OrthoDB" id="371959at2157"/>
<dbReference type="Proteomes" id="UP000000253">
    <property type="component" value="Chromosome"/>
</dbReference>
<dbReference type="GO" id="GO:0004067">
    <property type="term" value="F:asparaginase activity"/>
    <property type="evidence" value="ECO:0007669"/>
    <property type="project" value="InterPro"/>
</dbReference>
<dbReference type="GO" id="GO:0005524">
    <property type="term" value="F:ATP binding"/>
    <property type="evidence" value="ECO:0007669"/>
    <property type="project" value="UniProtKB-KW"/>
</dbReference>
<dbReference type="GO" id="GO:0050567">
    <property type="term" value="F:glutaminyl-tRNA synthase (glutamine-hydrolyzing) activity"/>
    <property type="evidence" value="ECO:0007669"/>
    <property type="project" value="UniProtKB-UniRule"/>
</dbReference>
<dbReference type="GO" id="GO:0006520">
    <property type="term" value="P:amino acid metabolic process"/>
    <property type="evidence" value="ECO:0007669"/>
    <property type="project" value="InterPro"/>
</dbReference>
<dbReference type="GO" id="GO:0006450">
    <property type="term" value="P:regulation of translational fidelity"/>
    <property type="evidence" value="ECO:0007669"/>
    <property type="project" value="InterPro"/>
</dbReference>
<dbReference type="GO" id="GO:0006412">
    <property type="term" value="P:translation"/>
    <property type="evidence" value="ECO:0007669"/>
    <property type="project" value="UniProtKB-UniRule"/>
</dbReference>
<dbReference type="CDD" id="cd08962">
    <property type="entry name" value="GatD"/>
    <property type="match status" value="1"/>
</dbReference>
<dbReference type="FunFam" id="3.40.50.1170:FF:000001">
    <property type="entry name" value="L-asparaginase 2"/>
    <property type="match status" value="1"/>
</dbReference>
<dbReference type="Gene3D" id="2.30.30.520">
    <property type="match status" value="1"/>
</dbReference>
<dbReference type="Gene3D" id="3.40.50.40">
    <property type="match status" value="1"/>
</dbReference>
<dbReference type="Gene3D" id="3.40.50.1170">
    <property type="entry name" value="L-asparaginase, N-terminal domain"/>
    <property type="match status" value="1"/>
</dbReference>
<dbReference type="HAMAP" id="MF_00586">
    <property type="entry name" value="GatD"/>
    <property type="match status" value="1"/>
</dbReference>
<dbReference type="InterPro" id="IPR006033">
    <property type="entry name" value="AsnA_fam"/>
</dbReference>
<dbReference type="InterPro" id="IPR036152">
    <property type="entry name" value="Asp/glu_Ase-like_sf"/>
</dbReference>
<dbReference type="InterPro" id="IPR006034">
    <property type="entry name" value="Asparaginase/glutaminase-like"/>
</dbReference>
<dbReference type="InterPro" id="IPR020827">
    <property type="entry name" value="Asparaginase/glutaminase_AS1"/>
</dbReference>
<dbReference type="InterPro" id="IPR027475">
    <property type="entry name" value="Asparaginase/glutaminase_AS2"/>
</dbReference>
<dbReference type="InterPro" id="IPR040919">
    <property type="entry name" value="Asparaginase_C"/>
</dbReference>
<dbReference type="InterPro" id="IPR011878">
    <property type="entry name" value="GatD"/>
</dbReference>
<dbReference type="InterPro" id="IPR040918">
    <property type="entry name" value="GatD_N"/>
</dbReference>
<dbReference type="InterPro" id="IPR037222">
    <property type="entry name" value="GatD_N_sf"/>
</dbReference>
<dbReference type="InterPro" id="IPR027473">
    <property type="entry name" value="L-asparaginase_C"/>
</dbReference>
<dbReference type="InterPro" id="IPR027474">
    <property type="entry name" value="L-asparaginase_N"/>
</dbReference>
<dbReference type="InterPro" id="IPR037152">
    <property type="entry name" value="L-asparaginase_N_sf"/>
</dbReference>
<dbReference type="NCBIfam" id="TIGR00519">
    <property type="entry name" value="asnASE_I"/>
    <property type="match status" value="1"/>
</dbReference>
<dbReference type="NCBIfam" id="TIGR02153">
    <property type="entry name" value="gatD_arch"/>
    <property type="match status" value="1"/>
</dbReference>
<dbReference type="NCBIfam" id="NF003217">
    <property type="entry name" value="PRK04183.1"/>
    <property type="match status" value="1"/>
</dbReference>
<dbReference type="PANTHER" id="PTHR11707:SF28">
    <property type="entry name" value="60 KDA LYSOPHOSPHOLIPASE"/>
    <property type="match status" value="1"/>
</dbReference>
<dbReference type="PANTHER" id="PTHR11707">
    <property type="entry name" value="L-ASPARAGINASE"/>
    <property type="match status" value="1"/>
</dbReference>
<dbReference type="Pfam" id="PF00710">
    <property type="entry name" value="Asparaginase"/>
    <property type="match status" value="1"/>
</dbReference>
<dbReference type="Pfam" id="PF17763">
    <property type="entry name" value="Asparaginase_C"/>
    <property type="match status" value="1"/>
</dbReference>
<dbReference type="Pfam" id="PF18195">
    <property type="entry name" value="GatD_N"/>
    <property type="match status" value="1"/>
</dbReference>
<dbReference type="PIRSF" id="PIRSF500175">
    <property type="entry name" value="Glu_ADT_D"/>
    <property type="match status" value="1"/>
</dbReference>
<dbReference type="PIRSF" id="PIRSF001220">
    <property type="entry name" value="L-ASNase_gatD"/>
    <property type="match status" value="1"/>
</dbReference>
<dbReference type="PRINTS" id="PR00139">
    <property type="entry name" value="ASNGLNASE"/>
</dbReference>
<dbReference type="SMART" id="SM00870">
    <property type="entry name" value="Asparaginase"/>
    <property type="match status" value="1"/>
</dbReference>
<dbReference type="SUPFAM" id="SSF141300">
    <property type="entry name" value="GatD N-terminal domain-like"/>
    <property type="match status" value="1"/>
</dbReference>
<dbReference type="SUPFAM" id="SSF53774">
    <property type="entry name" value="Glutaminase/Asparaginase"/>
    <property type="match status" value="1"/>
</dbReference>
<dbReference type="PROSITE" id="PS00144">
    <property type="entry name" value="ASN_GLN_ASE_1"/>
    <property type="match status" value="1"/>
</dbReference>
<dbReference type="PROSITE" id="PS00917">
    <property type="entry name" value="ASN_GLN_ASE_2"/>
    <property type="match status" value="1"/>
</dbReference>
<dbReference type="PROSITE" id="PS51732">
    <property type="entry name" value="ASN_GLN_ASE_3"/>
    <property type="match status" value="1"/>
</dbReference>
<comment type="function">
    <text evidence="1">Allows the formation of correctly charged Gln-tRNA(Gln) through the transamidation of misacylated Glu-tRNA(Gln) in organisms which lack glutaminyl-tRNA synthetase. The reaction takes place in the presence of glutamine and ATP through an activated gamma-phospho-Glu-tRNA(Gln). The GatDE system is specific for glutamate and does not act on aspartate.</text>
</comment>
<comment type="catalytic activity">
    <reaction evidence="1">
        <text>L-glutamyl-tRNA(Gln) + L-glutamine + ATP + H2O = L-glutaminyl-tRNA(Gln) + L-glutamate + ADP + phosphate + H(+)</text>
        <dbReference type="Rhea" id="RHEA:17521"/>
        <dbReference type="Rhea" id="RHEA-COMP:9681"/>
        <dbReference type="Rhea" id="RHEA-COMP:9684"/>
        <dbReference type="ChEBI" id="CHEBI:15377"/>
        <dbReference type="ChEBI" id="CHEBI:15378"/>
        <dbReference type="ChEBI" id="CHEBI:29985"/>
        <dbReference type="ChEBI" id="CHEBI:30616"/>
        <dbReference type="ChEBI" id="CHEBI:43474"/>
        <dbReference type="ChEBI" id="CHEBI:58359"/>
        <dbReference type="ChEBI" id="CHEBI:78520"/>
        <dbReference type="ChEBI" id="CHEBI:78521"/>
        <dbReference type="ChEBI" id="CHEBI:456216"/>
    </reaction>
</comment>
<comment type="subunit">
    <text evidence="1">Heterodimer of GatD and GatE.</text>
</comment>
<comment type="similarity">
    <text evidence="1">Belongs to the asparaginase 1 family. GatD subfamily.</text>
</comment>